<proteinExistence type="evidence at protein level"/>
<organism>
    <name type="scientific">Mycobacteroides abscessus (strain ATCC 19977 / DSM 44196 / CCUG 20993 / CIP 104536 / JCM 13569 / NCTC 13031 / TMC 1543 / L948)</name>
    <name type="common">Mycobacterium abscessus</name>
    <dbReference type="NCBI Taxonomy" id="561007"/>
    <lineage>
        <taxon>Bacteria</taxon>
        <taxon>Bacillati</taxon>
        <taxon>Actinomycetota</taxon>
        <taxon>Actinomycetes</taxon>
        <taxon>Mycobacteriales</taxon>
        <taxon>Mycobacteriaceae</taxon>
        <taxon>Mycobacteroides</taxon>
        <taxon>Mycobacteroides abscessus</taxon>
    </lineage>
</organism>
<accession>B1MLU6</accession>
<name>KHSE_MYCA9</name>
<keyword id="KW-0002">3D-structure</keyword>
<keyword id="KW-0028">Amino-acid biosynthesis</keyword>
<keyword id="KW-0067">ATP-binding</keyword>
<keyword id="KW-0963">Cytoplasm</keyword>
<keyword id="KW-0418">Kinase</keyword>
<keyword id="KW-0547">Nucleotide-binding</keyword>
<keyword id="KW-1185">Reference proteome</keyword>
<keyword id="KW-0791">Threonine biosynthesis</keyword>
<keyword id="KW-0808">Transferase</keyword>
<dbReference type="EC" id="2.7.1.39" evidence="1"/>
<dbReference type="EMBL" id="CU458896">
    <property type="protein sequence ID" value="CAM61523.1"/>
    <property type="molecule type" value="Genomic_DNA"/>
</dbReference>
<dbReference type="RefSeq" id="WP_005110130.1">
    <property type="nucleotide sequence ID" value="NZ_MLCG01000002.1"/>
</dbReference>
<dbReference type="PDB" id="6CYZ">
    <property type="method" value="X-ray"/>
    <property type="resolution" value="2.04 A"/>
    <property type="chains" value="A/B=1-306"/>
</dbReference>
<dbReference type="PDBsum" id="6CYZ"/>
<dbReference type="SMR" id="B1MLU6"/>
<dbReference type="GeneID" id="93378382"/>
<dbReference type="KEGG" id="mab:MAB_1437"/>
<dbReference type="UniPathway" id="UPA00050">
    <property type="reaction ID" value="UER00064"/>
</dbReference>
<dbReference type="Proteomes" id="UP000007137">
    <property type="component" value="Chromosome"/>
</dbReference>
<dbReference type="GO" id="GO:0005737">
    <property type="term" value="C:cytoplasm"/>
    <property type="evidence" value="ECO:0007669"/>
    <property type="project" value="UniProtKB-SubCell"/>
</dbReference>
<dbReference type="GO" id="GO:0005524">
    <property type="term" value="F:ATP binding"/>
    <property type="evidence" value="ECO:0007669"/>
    <property type="project" value="UniProtKB-UniRule"/>
</dbReference>
<dbReference type="GO" id="GO:0004413">
    <property type="term" value="F:homoserine kinase activity"/>
    <property type="evidence" value="ECO:0007669"/>
    <property type="project" value="UniProtKB-UniRule"/>
</dbReference>
<dbReference type="GO" id="GO:0009088">
    <property type="term" value="P:threonine biosynthetic process"/>
    <property type="evidence" value="ECO:0007669"/>
    <property type="project" value="UniProtKB-UniRule"/>
</dbReference>
<dbReference type="Gene3D" id="3.30.230.10">
    <property type="match status" value="1"/>
</dbReference>
<dbReference type="Gene3D" id="3.30.70.890">
    <property type="entry name" value="GHMP kinase, C-terminal domain"/>
    <property type="match status" value="1"/>
</dbReference>
<dbReference type="HAMAP" id="MF_00384">
    <property type="entry name" value="Homoser_kinase"/>
    <property type="match status" value="1"/>
</dbReference>
<dbReference type="InterPro" id="IPR013750">
    <property type="entry name" value="GHMP_kinase_C_dom"/>
</dbReference>
<dbReference type="InterPro" id="IPR036554">
    <property type="entry name" value="GHMP_kinase_C_sf"/>
</dbReference>
<dbReference type="InterPro" id="IPR006204">
    <property type="entry name" value="GHMP_kinase_N_dom"/>
</dbReference>
<dbReference type="InterPro" id="IPR006203">
    <property type="entry name" value="GHMP_knse_ATP-bd_CS"/>
</dbReference>
<dbReference type="InterPro" id="IPR000870">
    <property type="entry name" value="Homoserine_kinase"/>
</dbReference>
<dbReference type="InterPro" id="IPR020568">
    <property type="entry name" value="Ribosomal_Su5_D2-typ_SF"/>
</dbReference>
<dbReference type="InterPro" id="IPR014721">
    <property type="entry name" value="Ribsml_uS5_D2-typ_fold_subgr"/>
</dbReference>
<dbReference type="NCBIfam" id="TIGR00191">
    <property type="entry name" value="thrB"/>
    <property type="match status" value="1"/>
</dbReference>
<dbReference type="PANTHER" id="PTHR20861:SF1">
    <property type="entry name" value="HOMOSERINE KINASE"/>
    <property type="match status" value="1"/>
</dbReference>
<dbReference type="PANTHER" id="PTHR20861">
    <property type="entry name" value="HOMOSERINE/4-DIPHOSPHOCYTIDYL-2-C-METHYL-D-ERYTHRITOL KINASE"/>
    <property type="match status" value="1"/>
</dbReference>
<dbReference type="Pfam" id="PF08544">
    <property type="entry name" value="GHMP_kinases_C"/>
    <property type="match status" value="1"/>
</dbReference>
<dbReference type="Pfam" id="PF00288">
    <property type="entry name" value="GHMP_kinases_N"/>
    <property type="match status" value="1"/>
</dbReference>
<dbReference type="PIRSF" id="PIRSF000676">
    <property type="entry name" value="Homoser_kin"/>
    <property type="match status" value="1"/>
</dbReference>
<dbReference type="PRINTS" id="PR00958">
    <property type="entry name" value="HOMSERKINASE"/>
</dbReference>
<dbReference type="SUPFAM" id="SSF55060">
    <property type="entry name" value="GHMP Kinase, C-terminal domain"/>
    <property type="match status" value="1"/>
</dbReference>
<dbReference type="SUPFAM" id="SSF54211">
    <property type="entry name" value="Ribosomal protein S5 domain 2-like"/>
    <property type="match status" value="1"/>
</dbReference>
<dbReference type="PROSITE" id="PS00627">
    <property type="entry name" value="GHMP_KINASES_ATP"/>
    <property type="match status" value="1"/>
</dbReference>
<sequence length="306" mass="30847">MSEVLPAGLATTVLVPASSANLGPGFDSLGIALSLYDEIEVNTTESGLKVAVEGQGAGEVPLDGSHLVVRAIERGLAAGGAAAPGLIVQCHNKIPHSRGLGSSAAAAVAGLGVANGLLAKAGRAVLSDDVLVQLASEFEGHPDNAAASVLGGAVVSWSETSGATPIYAATRLDVHPDIKIVAAIPEEQSSTAHTRVLLPQAVTHVDARFNISRVALLTVALTARPDLLMTATEDRLHQPQRASAMPASADVLAYLRSQGVAAVLSGAGPAVLALTTVDLPDSAVKYAEDQGFSLVAMAVSAGVSVR</sequence>
<feature type="chain" id="PRO_1000122432" description="Homoserine kinase">
    <location>
        <begin position="1"/>
        <end position="306"/>
    </location>
</feature>
<feature type="binding site" evidence="1">
    <location>
        <begin position="95"/>
        <end position="105"/>
    </location>
    <ligand>
        <name>ATP</name>
        <dbReference type="ChEBI" id="CHEBI:30616"/>
    </ligand>
</feature>
<feature type="strand" evidence="2">
    <location>
        <begin position="10"/>
        <end position="20"/>
    </location>
</feature>
<feature type="turn" evidence="2">
    <location>
        <begin position="22"/>
        <end position="24"/>
    </location>
</feature>
<feature type="turn" evidence="2">
    <location>
        <begin position="26"/>
        <end position="28"/>
    </location>
</feature>
<feature type="strand" evidence="2">
    <location>
        <begin position="29"/>
        <end position="43"/>
    </location>
</feature>
<feature type="strand" evidence="2">
    <location>
        <begin position="48"/>
        <end position="54"/>
    </location>
</feature>
<feature type="turn" evidence="2">
    <location>
        <begin position="55"/>
        <end position="59"/>
    </location>
</feature>
<feature type="helix" evidence="2">
    <location>
        <begin position="67"/>
        <end position="78"/>
    </location>
</feature>
<feature type="strand" evidence="2">
    <location>
        <begin position="86"/>
        <end position="92"/>
    </location>
</feature>
<feature type="strand" evidence="2">
    <location>
        <begin position="96"/>
        <end position="100"/>
    </location>
</feature>
<feature type="helix" evidence="2">
    <location>
        <begin position="102"/>
        <end position="120"/>
    </location>
</feature>
<feature type="helix" evidence="2">
    <location>
        <begin position="128"/>
        <end position="139"/>
    </location>
</feature>
<feature type="helix" evidence="2">
    <location>
        <begin position="143"/>
        <end position="150"/>
    </location>
</feature>
<feature type="strand" evidence="2">
    <location>
        <begin position="151"/>
        <end position="159"/>
    </location>
</feature>
<feature type="strand" evidence="2">
    <location>
        <begin position="166"/>
        <end position="172"/>
    </location>
</feature>
<feature type="strand" evidence="2">
    <location>
        <begin position="179"/>
        <end position="184"/>
    </location>
</feature>
<feature type="strand" evidence="2">
    <location>
        <begin position="200"/>
        <end position="203"/>
    </location>
</feature>
<feature type="helix" evidence="2">
    <location>
        <begin position="204"/>
        <end position="222"/>
    </location>
</feature>
<feature type="helix" evidence="2">
    <location>
        <begin position="225"/>
        <end position="227"/>
    </location>
</feature>
<feature type="helix" evidence="2">
    <location>
        <begin position="228"/>
        <end position="231"/>
    </location>
</feature>
<feature type="strand" evidence="2">
    <location>
        <begin position="235"/>
        <end position="237"/>
    </location>
</feature>
<feature type="helix" evidence="2">
    <location>
        <begin position="238"/>
        <end position="241"/>
    </location>
</feature>
<feature type="turn" evidence="2">
    <location>
        <begin position="242"/>
        <end position="244"/>
    </location>
</feature>
<feature type="helix" evidence="2">
    <location>
        <begin position="246"/>
        <end position="257"/>
    </location>
</feature>
<feature type="strand" evidence="2">
    <location>
        <begin position="261"/>
        <end position="265"/>
    </location>
</feature>
<feature type="strand" evidence="2">
    <location>
        <begin position="268"/>
        <end position="277"/>
    </location>
</feature>
<feature type="helix" evidence="2">
    <location>
        <begin position="281"/>
        <end position="289"/>
    </location>
</feature>
<feature type="strand" evidence="2">
    <location>
        <begin position="293"/>
        <end position="297"/>
    </location>
</feature>
<feature type="strand" evidence="2">
    <location>
        <begin position="304"/>
        <end position="306"/>
    </location>
</feature>
<protein>
    <recommendedName>
        <fullName evidence="1">Homoserine kinase</fullName>
        <shortName evidence="1">HK</shortName>
        <shortName evidence="1">HSK</shortName>
        <ecNumber evidence="1">2.7.1.39</ecNumber>
    </recommendedName>
</protein>
<gene>
    <name evidence="1" type="primary">thrB</name>
    <name type="ordered locus">MAB_1437</name>
</gene>
<evidence type="ECO:0000255" key="1">
    <source>
        <dbReference type="HAMAP-Rule" id="MF_00384"/>
    </source>
</evidence>
<evidence type="ECO:0007829" key="2">
    <source>
        <dbReference type="PDB" id="6CYZ"/>
    </source>
</evidence>
<reference key="1">
    <citation type="journal article" date="2009" name="PLoS ONE">
        <title>Non mycobacterial virulence genes in the genome of the emerging pathogen Mycobacterium abscessus.</title>
        <authorList>
            <person name="Ripoll F."/>
            <person name="Pasek S."/>
            <person name="Schenowitz C."/>
            <person name="Dossat C."/>
            <person name="Barbe V."/>
            <person name="Rottman M."/>
            <person name="Macheras E."/>
            <person name="Heym B."/>
            <person name="Herrmann J.L."/>
            <person name="Daffe M."/>
            <person name="Brosch R."/>
            <person name="Risler J.L."/>
            <person name="Gaillard J.L."/>
        </authorList>
    </citation>
    <scope>NUCLEOTIDE SEQUENCE [LARGE SCALE GENOMIC DNA]</scope>
    <source>
        <strain>ATCC 19977 / DSM 44196 / CCUG 20993 / CIP 104536 / JCM 13569 / NCTC 13031 / TMC 1543 / L948</strain>
    </source>
</reference>
<comment type="function">
    <text evidence="1">Catalyzes the ATP-dependent phosphorylation of L-homoserine to L-homoserine phosphate.</text>
</comment>
<comment type="catalytic activity">
    <reaction evidence="1">
        <text>L-homoserine + ATP = O-phospho-L-homoserine + ADP + H(+)</text>
        <dbReference type="Rhea" id="RHEA:13985"/>
        <dbReference type="ChEBI" id="CHEBI:15378"/>
        <dbReference type="ChEBI" id="CHEBI:30616"/>
        <dbReference type="ChEBI" id="CHEBI:57476"/>
        <dbReference type="ChEBI" id="CHEBI:57590"/>
        <dbReference type="ChEBI" id="CHEBI:456216"/>
        <dbReference type="EC" id="2.7.1.39"/>
    </reaction>
</comment>
<comment type="pathway">
    <text evidence="1">Amino-acid biosynthesis; L-threonine biosynthesis; L-threonine from L-aspartate: step 4/5.</text>
</comment>
<comment type="subcellular location">
    <subcellularLocation>
        <location evidence="1">Cytoplasm</location>
    </subcellularLocation>
</comment>
<comment type="similarity">
    <text evidence="1">Belongs to the GHMP kinase family. Homoserine kinase subfamily.</text>
</comment>